<name>SYP_ANADF</name>
<comment type="function">
    <text evidence="1">Catalyzes the attachment of proline to tRNA(Pro) in a two-step reaction: proline is first activated by ATP to form Pro-AMP and then transferred to the acceptor end of tRNA(Pro). As ProRS can inadvertently accommodate and process non-cognate amino acids such as alanine and cysteine, to avoid such errors it has two additional distinct editing activities against alanine. One activity is designated as 'pretransfer' editing and involves the tRNA(Pro)-independent hydrolysis of activated Ala-AMP. The other activity is designated 'posttransfer' editing and involves deacylation of mischarged Ala-tRNA(Pro). The misacylated Cys-tRNA(Pro) is not edited by ProRS.</text>
</comment>
<comment type="catalytic activity">
    <reaction evidence="1">
        <text>tRNA(Pro) + L-proline + ATP = L-prolyl-tRNA(Pro) + AMP + diphosphate</text>
        <dbReference type="Rhea" id="RHEA:14305"/>
        <dbReference type="Rhea" id="RHEA-COMP:9700"/>
        <dbReference type="Rhea" id="RHEA-COMP:9702"/>
        <dbReference type="ChEBI" id="CHEBI:30616"/>
        <dbReference type="ChEBI" id="CHEBI:33019"/>
        <dbReference type="ChEBI" id="CHEBI:60039"/>
        <dbReference type="ChEBI" id="CHEBI:78442"/>
        <dbReference type="ChEBI" id="CHEBI:78532"/>
        <dbReference type="ChEBI" id="CHEBI:456215"/>
        <dbReference type="EC" id="6.1.1.15"/>
    </reaction>
</comment>
<comment type="subunit">
    <text evidence="1">Homodimer.</text>
</comment>
<comment type="subcellular location">
    <subcellularLocation>
        <location evidence="1">Cytoplasm</location>
    </subcellularLocation>
</comment>
<comment type="domain">
    <text evidence="1">Consists of three domains: the N-terminal catalytic domain, the editing domain and the C-terminal anticodon-binding domain.</text>
</comment>
<comment type="similarity">
    <text evidence="1">Belongs to the class-II aminoacyl-tRNA synthetase family. ProS type 1 subfamily.</text>
</comment>
<accession>A7H7J7</accession>
<keyword id="KW-0030">Aminoacyl-tRNA synthetase</keyword>
<keyword id="KW-0067">ATP-binding</keyword>
<keyword id="KW-0963">Cytoplasm</keyword>
<keyword id="KW-0436">Ligase</keyword>
<keyword id="KW-0547">Nucleotide-binding</keyword>
<keyword id="KW-0648">Protein biosynthesis</keyword>
<keyword id="KW-1185">Reference proteome</keyword>
<gene>
    <name evidence="1" type="primary">proS</name>
    <name type="ordered locus">Anae109_0478</name>
</gene>
<proteinExistence type="inferred from homology"/>
<organism>
    <name type="scientific">Anaeromyxobacter sp. (strain Fw109-5)</name>
    <dbReference type="NCBI Taxonomy" id="404589"/>
    <lineage>
        <taxon>Bacteria</taxon>
        <taxon>Pseudomonadati</taxon>
        <taxon>Myxococcota</taxon>
        <taxon>Myxococcia</taxon>
        <taxon>Myxococcales</taxon>
        <taxon>Cystobacterineae</taxon>
        <taxon>Anaeromyxobacteraceae</taxon>
        <taxon>Anaeromyxobacter</taxon>
    </lineage>
</organism>
<protein>
    <recommendedName>
        <fullName evidence="1">Proline--tRNA ligase</fullName>
        <ecNumber evidence="1">6.1.1.15</ecNumber>
    </recommendedName>
    <alternativeName>
        <fullName evidence="1">Prolyl-tRNA synthetase</fullName>
        <shortName evidence="1">ProRS</shortName>
    </alternativeName>
</protein>
<reference key="1">
    <citation type="journal article" date="2015" name="Genome Announc.">
        <title>Complete genome sequence of Anaeromyxobacter sp. Fw109-5, an anaerobic, metal-reducing bacterium isolated from a contaminated subsurface environment.</title>
        <authorList>
            <person name="Hwang C."/>
            <person name="Copeland A."/>
            <person name="Lucas S."/>
            <person name="Lapidus A."/>
            <person name="Barry K."/>
            <person name="Glavina Del Rio T."/>
            <person name="Dalin E."/>
            <person name="Tice H."/>
            <person name="Pitluck S."/>
            <person name="Sims D."/>
            <person name="Brettin T."/>
            <person name="Bruce D.C."/>
            <person name="Detter J.C."/>
            <person name="Han C.S."/>
            <person name="Schmutz J."/>
            <person name="Larimer F.W."/>
            <person name="Land M.L."/>
            <person name="Hauser L.J."/>
            <person name="Kyrpides N."/>
            <person name="Lykidis A."/>
            <person name="Richardson P."/>
            <person name="Belieav A."/>
            <person name="Sanford R.A."/>
            <person name="Loeffler F.E."/>
            <person name="Fields M.W."/>
        </authorList>
    </citation>
    <scope>NUCLEOTIDE SEQUENCE [LARGE SCALE GENOMIC DNA]</scope>
    <source>
        <strain>Fw109-5</strain>
    </source>
</reference>
<feature type="chain" id="PRO_1000069118" description="Proline--tRNA ligase">
    <location>
        <begin position="1"/>
        <end position="575"/>
    </location>
</feature>
<evidence type="ECO:0000255" key="1">
    <source>
        <dbReference type="HAMAP-Rule" id="MF_01569"/>
    </source>
</evidence>
<dbReference type="EC" id="6.1.1.15" evidence="1"/>
<dbReference type="EMBL" id="CP000769">
    <property type="protein sequence ID" value="ABS24693.1"/>
    <property type="molecule type" value="Genomic_DNA"/>
</dbReference>
<dbReference type="RefSeq" id="WP_011984799.1">
    <property type="nucleotide sequence ID" value="NC_009675.1"/>
</dbReference>
<dbReference type="SMR" id="A7H7J7"/>
<dbReference type="STRING" id="404589.Anae109_0478"/>
<dbReference type="KEGG" id="afw:Anae109_0478"/>
<dbReference type="eggNOG" id="COG0442">
    <property type="taxonomic scope" value="Bacteria"/>
</dbReference>
<dbReference type="HOGENOM" id="CLU_016739_0_0_7"/>
<dbReference type="OrthoDB" id="9809052at2"/>
<dbReference type="Proteomes" id="UP000006382">
    <property type="component" value="Chromosome"/>
</dbReference>
<dbReference type="GO" id="GO:0005829">
    <property type="term" value="C:cytosol"/>
    <property type="evidence" value="ECO:0007669"/>
    <property type="project" value="TreeGrafter"/>
</dbReference>
<dbReference type="GO" id="GO:0002161">
    <property type="term" value="F:aminoacyl-tRNA deacylase activity"/>
    <property type="evidence" value="ECO:0007669"/>
    <property type="project" value="InterPro"/>
</dbReference>
<dbReference type="GO" id="GO:0005524">
    <property type="term" value="F:ATP binding"/>
    <property type="evidence" value="ECO:0007669"/>
    <property type="project" value="UniProtKB-UniRule"/>
</dbReference>
<dbReference type="GO" id="GO:0004827">
    <property type="term" value="F:proline-tRNA ligase activity"/>
    <property type="evidence" value="ECO:0007669"/>
    <property type="project" value="UniProtKB-UniRule"/>
</dbReference>
<dbReference type="GO" id="GO:0006433">
    <property type="term" value="P:prolyl-tRNA aminoacylation"/>
    <property type="evidence" value="ECO:0007669"/>
    <property type="project" value="UniProtKB-UniRule"/>
</dbReference>
<dbReference type="CDD" id="cd04334">
    <property type="entry name" value="ProRS-INS"/>
    <property type="match status" value="1"/>
</dbReference>
<dbReference type="CDD" id="cd00861">
    <property type="entry name" value="ProRS_anticodon_short"/>
    <property type="match status" value="1"/>
</dbReference>
<dbReference type="CDD" id="cd00779">
    <property type="entry name" value="ProRS_core_prok"/>
    <property type="match status" value="1"/>
</dbReference>
<dbReference type="FunFam" id="3.30.930.10:FF:000066">
    <property type="entry name" value="Proline--tRNA ligase"/>
    <property type="match status" value="1"/>
</dbReference>
<dbReference type="Gene3D" id="3.40.50.800">
    <property type="entry name" value="Anticodon-binding domain"/>
    <property type="match status" value="1"/>
</dbReference>
<dbReference type="Gene3D" id="3.30.930.10">
    <property type="entry name" value="Bira Bifunctional Protein, Domain 2"/>
    <property type="match status" value="2"/>
</dbReference>
<dbReference type="Gene3D" id="3.90.960.10">
    <property type="entry name" value="YbaK/aminoacyl-tRNA synthetase-associated domain"/>
    <property type="match status" value="1"/>
</dbReference>
<dbReference type="HAMAP" id="MF_01569">
    <property type="entry name" value="Pro_tRNA_synth_type1"/>
    <property type="match status" value="1"/>
</dbReference>
<dbReference type="InterPro" id="IPR002314">
    <property type="entry name" value="aa-tRNA-synt_IIb"/>
</dbReference>
<dbReference type="InterPro" id="IPR006195">
    <property type="entry name" value="aa-tRNA-synth_II"/>
</dbReference>
<dbReference type="InterPro" id="IPR045864">
    <property type="entry name" value="aa-tRNA-synth_II/BPL/LPL"/>
</dbReference>
<dbReference type="InterPro" id="IPR004154">
    <property type="entry name" value="Anticodon-bd"/>
</dbReference>
<dbReference type="InterPro" id="IPR036621">
    <property type="entry name" value="Anticodon-bd_dom_sf"/>
</dbReference>
<dbReference type="InterPro" id="IPR002316">
    <property type="entry name" value="Pro-tRNA-ligase_IIa"/>
</dbReference>
<dbReference type="InterPro" id="IPR004500">
    <property type="entry name" value="Pro-tRNA-synth_IIa_bac-type"/>
</dbReference>
<dbReference type="InterPro" id="IPR023717">
    <property type="entry name" value="Pro-tRNA-Synthase_IIa_type1"/>
</dbReference>
<dbReference type="InterPro" id="IPR050062">
    <property type="entry name" value="Pro-tRNA_synthetase"/>
</dbReference>
<dbReference type="InterPro" id="IPR044140">
    <property type="entry name" value="ProRS_anticodon_short"/>
</dbReference>
<dbReference type="InterPro" id="IPR033730">
    <property type="entry name" value="ProRS_core_prok"/>
</dbReference>
<dbReference type="InterPro" id="IPR036754">
    <property type="entry name" value="YbaK/aa-tRNA-synt-asso_dom_sf"/>
</dbReference>
<dbReference type="InterPro" id="IPR007214">
    <property type="entry name" value="YbaK/aa-tRNA-synth-assoc-dom"/>
</dbReference>
<dbReference type="NCBIfam" id="NF006625">
    <property type="entry name" value="PRK09194.1"/>
    <property type="match status" value="1"/>
</dbReference>
<dbReference type="NCBIfam" id="TIGR00409">
    <property type="entry name" value="proS_fam_II"/>
    <property type="match status" value="1"/>
</dbReference>
<dbReference type="PANTHER" id="PTHR42753">
    <property type="entry name" value="MITOCHONDRIAL RIBOSOME PROTEIN L39/PROLYL-TRNA LIGASE FAMILY MEMBER"/>
    <property type="match status" value="1"/>
</dbReference>
<dbReference type="PANTHER" id="PTHR42753:SF2">
    <property type="entry name" value="PROLINE--TRNA LIGASE"/>
    <property type="match status" value="1"/>
</dbReference>
<dbReference type="Pfam" id="PF03129">
    <property type="entry name" value="HGTP_anticodon"/>
    <property type="match status" value="1"/>
</dbReference>
<dbReference type="Pfam" id="PF00587">
    <property type="entry name" value="tRNA-synt_2b"/>
    <property type="match status" value="1"/>
</dbReference>
<dbReference type="Pfam" id="PF04073">
    <property type="entry name" value="tRNA_edit"/>
    <property type="match status" value="1"/>
</dbReference>
<dbReference type="PRINTS" id="PR01046">
    <property type="entry name" value="TRNASYNTHPRO"/>
</dbReference>
<dbReference type="SUPFAM" id="SSF52954">
    <property type="entry name" value="Class II aaRS ABD-related"/>
    <property type="match status" value="1"/>
</dbReference>
<dbReference type="SUPFAM" id="SSF55681">
    <property type="entry name" value="Class II aaRS and biotin synthetases"/>
    <property type="match status" value="1"/>
</dbReference>
<dbReference type="SUPFAM" id="SSF55826">
    <property type="entry name" value="YbaK/ProRS associated domain"/>
    <property type="match status" value="1"/>
</dbReference>
<dbReference type="PROSITE" id="PS50862">
    <property type="entry name" value="AA_TRNA_LIGASE_II"/>
    <property type="match status" value="1"/>
</dbReference>
<sequence length="575" mass="63091">MPVVRLSQAFVPTLKEAPADAQVASHKLLVRAGFIRQLGAGIYDYLPLAKRTLAKIEAIVREEMDAIGGQEFYLPALHPAEIWKESGRWEVMGDNMFRLKDRKNGDYCLGMTHEEIFTAIARDELRSYRQLPQVWYQIQTKFRDEPRPKSGLLRVRQFTMKDAYSFDVDRAGLDKSYEDQRRAYERIFTRCGLDFVAVQAHSGAMGGSESSEFMVRTDAGEDLVAACPRCRYAANTETATSRLASEQDGAGLPKPEKFATPGVVTIEALEQPPYGVAARRQLKTLVYVADEKLVVAVVRGDQELNEAKLQTATGAQVIRPAHPEEIPSLMGARAGSLGAVGFSRAKVFVDPSLADRKDMVTGANEDGFHLRGVEVRRDVLTGPHATVAELRTVRAGEGCPRCDGTLDVFKALEVGHIFKLGTKYSESMKATVLDADGKAVPIVMGSYGIGVERIMAAAIELHHDELGIRWPPAIAPFQATVLTLGPEPELKKAADELVKALSDAGLEVLHDDREERAGVKFKDADLVGIPLRISVGKKGLAEGKVEWKLRGDKAVELVPLAEVARRAAEHVRAGR</sequence>